<organism>
    <name type="scientific">Staphylococcus aureus (strain Mu50 / ATCC 700699)</name>
    <dbReference type="NCBI Taxonomy" id="158878"/>
    <lineage>
        <taxon>Bacteria</taxon>
        <taxon>Bacillati</taxon>
        <taxon>Bacillota</taxon>
        <taxon>Bacilli</taxon>
        <taxon>Bacillales</taxon>
        <taxon>Staphylococcaceae</taxon>
        <taxon>Staphylococcus</taxon>
    </lineage>
</organism>
<sequence length="37" mass="4305">MKVRPSVKPICEKCKVIKRKGKVMVICENPKHKQRQG</sequence>
<name>RL36_STAAM</name>
<comment type="similarity">
    <text evidence="1">Belongs to the bacterial ribosomal protein bL36 family.</text>
</comment>
<accession>P66298</accession>
<accession>Q99S42</accession>
<protein>
    <recommendedName>
        <fullName evidence="1">Large ribosomal subunit protein bL36</fullName>
    </recommendedName>
    <alternativeName>
        <fullName evidence="2">50S ribosomal protein L36</fullName>
    </alternativeName>
</protein>
<reference key="1">
    <citation type="journal article" date="2001" name="Lancet">
        <title>Whole genome sequencing of meticillin-resistant Staphylococcus aureus.</title>
        <authorList>
            <person name="Kuroda M."/>
            <person name="Ohta T."/>
            <person name="Uchiyama I."/>
            <person name="Baba T."/>
            <person name="Yuzawa H."/>
            <person name="Kobayashi I."/>
            <person name="Cui L."/>
            <person name="Oguchi A."/>
            <person name="Aoki K."/>
            <person name="Nagai Y."/>
            <person name="Lian J.-Q."/>
            <person name="Ito T."/>
            <person name="Kanamori M."/>
            <person name="Matsumaru H."/>
            <person name="Maruyama A."/>
            <person name="Murakami H."/>
            <person name="Hosoyama A."/>
            <person name="Mizutani-Ui Y."/>
            <person name="Takahashi N.K."/>
            <person name="Sawano T."/>
            <person name="Inoue R."/>
            <person name="Kaito C."/>
            <person name="Sekimizu K."/>
            <person name="Hirakawa H."/>
            <person name="Kuhara S."/>
            <person name="Goto S."/>
            <person name="Yabuzaki J."/>
            <person name="Kanehisa M."/>
            <person name="Yamashita A."/>
            <person name="Oshima K."/>
            <person name="Furuya K."/>
            <person name="Yoshino C."/>
            <person name="Shiba T."/>
            <person name="Hattori M."/>
            <person name="Ogasawara N."/>
            <person name="Hayashi H."/>
            <person name="Hiramatsu K."/>
        </authorList>
    </citation>
    <scope>NUCLEOTIDE SEQUENCE [LARGE SCALE GENOMIC DNA]</scope>
    <source>
        <strain>Mu50 / ATCC 700699</strain>
    </source>
</reference>
<feature type="chain" id="PRO_0000126258" description="Large ribosomal subunit protein bL36">
    <location>
        <begin position="1"/>
        <end position="37"/>
    </location>
</feature>
<evidence type="ECO:0000255" key="1">
    <source>
        <dbReference type="HAMAP-Rule" id="MF_00251"/>
    </source>
</evidence>
<evidence type="ECO:0000305" key="2"/>
<dbReference type="EMBL" id="BA000017">
    <property type="protein sequence ID" value="BAB58389.1"/>
    <property type="molecule type" value="Genomic_DNA"/>
</dbReference>
<dbReference type="RefSeq" id="WP_000868342.1">
    <property type="nucleotide sequence ID" value="NC_002758.2"/>
</dbReference>
<dbReference type="SMR" id="P66298"/>
<dbReference type="GeneID" id="98346539"/>
<dbReference type="KEGG" id="sav:SAV2227"/>
<dbReference type="HOGENOM" id="CLU_135723_6_2_9"/>
<dbReference type="PhylomeDB" id="P66298"/>
<dbReference type="Proteomes" id="UP000002481">
    <property type="component" value="Chromosome"/>
</dbReference>
<dbReference type="GO" id="GO:0005737">
    <property type="term" value="C:cytoplasm"/>
    <property type="evidence" value="ECO:0007669"/>
    <property type="project" value="UniProtKB-ARBA"/>
</dbReference>
<dbReference type="GO" id="GO:1990904">
    <property type="term" value="C:ribonucleoprotein complex"/>
    <property type="evidence" value="ECO:0007669"/>
    <property type="project" value="UniProtKB-KW"/>
</dbReference>
<dbReference type="GO" id="GO:0005840">
    <property type="term" value="C:ribosome"/>
    <property type="evidence" value="ECO:0007669"/>
    <property type="project" value="UniProtKB-KW"/>
</dbReference>
<dbReference type="GO" id="GO:0003735">
    <property type="term" value="F:structural constituent of ribosome"/>
    <property type="evidence" value="ECO:0007669"/>
    <property type="project" value="InterPro"/>
</dbReference>
<dbReference type="GO" id="GO:0006412">
    <property type="term" value="P:translation"/>
    <property type="evidence" value="ECO:0007669"/>
    <property type="project" value="UniProtKB-UniRule"/>
</dbReference>
<dbReference type="HAMAP" id="MF_00251">
    <property type="entry name" value="Ribosomal_bL36"/>
    <property type="match status" value="1"/>
</dbReference>
<dbReference type="InterPro" id="IPR000473">
    <property type="entry name" value="Ribosomal_bL36"/>
</dbReference>
<dbReference type="InterPro" id="IPR035977">
    <property type="entry name" value="Ribosomal_bL36_sp"/>
</dbReference>
<dbReference type="NCBIfam" id="TIGR01022">
    <property type="entry name" value="rpmJ_bact"/>
    <property type="match status" value="1"/>
</dbReference>
<dbReference type="PANTHER" id="PTHR42888">
    <property type="entry name" value="50S RIBOSOMAL PROTEIN L36, CHLOROPLASTIC"/>
    <property type="match status" value="1"/>
</dbReference>
<dbReference type="PANTHER" id="PTHR42888:SF1">
    <property type="entry name" value="LARGE RIBOSOMAL SUBUNIT PROTEIN BL36C"/>
    <property type="match status" value="1"/>
</dbReference>
<dbReference type="Pfam" id="PF00444">
    <property type="entry name" value="Ribosomal_L36"/>
    <property type="match status" value="1"/>
</dbReference>
<dbReference type="SUPFAM" id="SSF57840">
    <property type="entry name" value="Ribosomal protein L36"/>
    <property type="match status" value="1"/>
</dbReference>
<dbReference type="PROSITE" id="PS00828">
    <property type="entry name" value="RIBOSOMAL_L36"/>
    <property type="match status" value="1"/>
</dbReference>
<keyword id="KW-0687">Ribonucleoprotein</keyword>
<keyword id="KW-0689">Ribosomal protein</keyword>
<proteinExistence type="inferred from homology"/>
<gene>
    <name evidence="1" type="primary">rpmJ</name>
    <name type="ordered locus">SAV2227</name>
</gene>